<comment type="subcellular location">
    <subcellularLocation>
        <location>Plastid</location>
        <location>Chloroplast</location>
    </subcellularLocation>
</comment>
<comment type="similarity">
    <text evidence="1">Belongs to the bacterial ribosomal protein bL36 family.</text>
</comment>
<proteinExistence type="inferred from homology"/>
<protein>
    <recommendedName>
        <fullName evidence="1">Large ribosomal subunit protein bL36c</fullName>
    </recommendedName>
    <alternativeName>
        <fullName evidence="2">50S ribosomal protein L36, chloroplastic</fullName>
    </alternativeName>
</protein>
<gene>
    <name evidence="1" type="primary">rpl36</name>
</gene>
<feature type="chain" id="PRO_0000276835" description="Large ribosomal subunit protein bL36c">
    <location>
        <begin position="1"/>
        <end position="37"/>
    </location>
</feature>
<dbReference type="EMBL" id="DQ347959">
    <property type="protein sequence ID" value="ABC56333.1"/>
    <property type="molecule type" value="Genomic_DNA"/>
</dbReference>
<dbReference type="EMBL" id="AM087200">
    <property type="protein sequence ID" value="CAJ32428.1"/>
    <property type="molecule type" value="Genomic_DNA"/>
</dbReference>
<dbReference type="RefSeq" id="AP_004962.1">
    <property type="nucleotide sequence ID" value="AC_000188.1"/>
</dbReference>
<dbReference type="RefSeq" id="YP_008563122.1">
    <property type="nucleotide sequence ID" value="NC_007898.3"/>
</dbReference>
<dbReference type="SMR" id="Q2MI67"/>
<dbReference type="FunCoup" id="Q2MI67">
    <property type="interactions" value="49"/>
</dbReference>
<dbReference type="STRING" id="4081.Q2MI67"/>
<dbReference type="GeneID" id="3950379"/>
<dbReference type="KEGG" id="sly:3950379"/>
<dbReference type="eggNOG" id="KOG0232">
    <property type="taxonomic scope" value="Eukaryota"/>
</dbReference>
<dbReference type="InParanoid" id="Q2MI67"/>
<dbReference type="Proteomes" id="UP000004994">
    <property type="component" value="Chloroplast"/>
</dbReference>
<dbReference type="GO" id="GO:0009507">
    <property type="term" value="C:chloroplast"/>
    <property type="evidence" value="ECO:0007669"/>
    <property type="project" value="UniProtKB-SubCell"/>
</dbReference>
<dbReference type="GO" id="GO:1990904">
    <property type="term" value="C:ribonucleoprotein complex"/>
    <property type="evidence" value="ECO:0007669"/>
    <property type="project" value="UniProtKB-KW"/>
</dbReference>
<dbReference type="GO" id="GO:0005840">
    <property type="term" value="C:ribosome"/>
    <property type="evidence" value="ECO:0007669"/>
    <property type="project" value="UniProtKB-KW"/>
</dbReference>
<dbReference type="GO" id="GO:0003735">
    <property type="term" value="F:structural constituent of ribosome"/>
    <property type="evidence" value="ECO:0007669"/>
    <property type="project" value="InterPro"/>
</dbReference>
<dbReference type="GO" id="GO:0006412">
    <property type="term" value="P:translation"/>
    <property type="evidence" value="ECO:0007669"/>
    <property type="project" value="UniProtKB-UniRule"/>
</dbReference>
<dbReference type="HAMAP" id="MF_00251">
    <property type="entry name" value="Ribosomal_bL36"/>
    <property type="match status" value="1"/>
</dbReference>
<dbReference type="InterPro" id="IPR000473">
    <property type="entry name" value="Ribosomal_bL36"/>
</dbReference>
<dbReference type="InterPro" id="IPR035977">
    <property type="entry name" value="Ribosomal_bL36_sp"/>
</dbReference>
<dbReference type="NCBIfam" id="TIGR01022">
    <property type="entry name" value="rpmJ_bact"/>
    <property type="match status" value="1"/>
</dbReference>
<dbReference type="PANTHER" id="PTHR42888">
    <property type="entry name" value="50S RIBOSOMAL PROTEIN L36, CHLOROPLASTIC"/>
    <property type="match status" value="1"/>
</dbReference>
<dbReference type="PANTHER" id="PTHR42888:SF1">
    <property type="entry name" value="LARGE RIBOSOMAL SUBUNIT PROTEIN BL36C"/>
    <property type="match status" value="1"/>
</dbReference>
<dbReference type="Pfam" id="PF00444">
    <property type="entry name" value="Ribosomal_L36"/>
    <property type="match status" value="1"/>
</dbReference>
<dbReference type="SUPFAM" id="SSF57840">
    <property type="entry name" value="Ribosomal protein L36"/>
    <property type="match status" value="1"/>
</dbReference>
<dbReference type="PROSITE" id="PS00828">
    <property type="entry name" value="RIBOSOMAL_L36"/>
    <property type="match status" value="1"/>
</dbReference>
<sequence length="37" mass="4460">MKIRASVRKICEKCRLIRRRGRIIVICSNPRHKQRQG</sequence>
<organism>
    <name type="scientific">Solanum lycopersicum</name>
    <name type="common">Tomato</name>
    <name type="synonym">Lycopersicon esculentum</name>
    <dbReference type="NCBI Taxonomy" id="4081"/>
    <lineage>
        <taxon>Eukaryota</taxon>
        <taxon>Viridiplantae</taxon>
        <taxon>Streptophyta</taxon>
        <taxon>Embryophyta</taxon>
        <taxon>Tracheophyta</taxon>
        <taxon>Spermatophyta</taxon>
        <taxon>Magnoliopsida</taxon>
        <taxon>eudicotyledons</taxon>
        <taxon>Gunneridae</taxon>
        <taxon>Pentapetalae</taxon>
        <taxon>asterids</taxon>
        <taxon>lamiids</taxon>
        <taxon>Solanales</taxon>
        <taxon>Solanaceae</taxon>
        <taxon>Solanoideae</taxon>
        <taxon>Solaneae</taxon>
        <taxon>Solanum</taxon>
        <taxon>Solanum subgen. Lycopersicon</taxon>
    </lineage>
</organism>
<accession>Q2MI67</accession>
<keyword id="KW-0150">Chloroplast</keyword>
<keyword id="KW-0934">Plastid</keyword>
<keyword id="KW-1185">Reference proteome</keyword>
<keyword id="KW-0687">Ribonucleoprotein</keyword>
<keyword id="KW-0689">Ribosomal protein</keyword>
<name>RK36_SOLLC</name>
<reference key="1">
    <citation type="journal article" date="2006" name="Theor. Appl. Genet.">
        <title>Complete chloroplast genome sequences of Solanum bulbocastanum, Solanum lycopersicum and comparative analyses with other Solanaceae genomes.</title>
        <authorList>
            <person name="Daniell H."/>
            <person name="Lee S.-B."/>
            <person name="Grevich J."/>
            <person name="Saski C."/>
            <person name="Quesada-Vargas T."/>
            <person name="Guda C."/>
            <person name="Tomkins J."/>
            <person name="Jansen R.K."/>
        </authorList>
    </citation>
    <scope>NUCLEOTIDE SEQUENCE [LARGE SCALE GENOMIC DNA]</scope>
    <source>
        <strain>cv. LA3023</strain>
    </source>
</reference>
<reference key="2">
    <citation type="journal article" date="2006" name="J. Mol. Evol.">
        <title>Sequence of the tomato chloroplast DNA and evolutionary comparison of solanaceous plastid genomes.</title>
        <authorList>
            <person name="Kahlau S."/>
            <person name="Aspinall S."/>
            <person name="Gray J.C."/>
            <person name="Bock R."/>
        </authorList>
    </citation>
    <scope>NUCLEOTIDE SEQUENCE [LARGE SCALE GENOMIC DNA]</scope>
    <source>
        <strain>cv. IPA-6</strain>
    </source>
</reference>
<geneLocation type="chloroplast"/>
<evidence type="ECO:0000255" key="1">
    <source>
        <dbReference type="HAMAP-Rule" id="MF_00251"/>
    </source>
</evidence>
<evidence type="ECO:0000305" key="2"/>